<accession>C1FND0</accession>
<name>FTHS_CLOBJ</name>
<organism>
    <name type="scientific">Clostridium botulinum (strain Kyoto / Type A2)</name>
    <dbReference type="NCBI Taxonomy" id="536232"/>
    <lineage>
        <taxon>Bacteria</taxon>
        <taxon>Bacillati</taxon>
        <taxon>Bacillota</taxon>
        <taxon>Clostridia</taxon>
        <taxon>Eubacteriales</taxon>
        <taxon>Clostridiaceae</taxon>
        <taxon>Clostridium</taxon>
    </lineage>
</organism>
<proteinExistence type="inferred from homology"/>
<protein>
    <recommendedName>
        <fullName evidence="1">Formate--tetrahydrofolate ligase</fullName>
        <ecNumber evidence="1">6.3.4.3</ecNumber>
    </recommendedName>
    <alternativeName>
        <fullName evidence="1">Formyltetrahydrofolate synthetase</fullName>
        <shortName evidence="1">FHS</shortName>
        <shortName evidence="1">FTHFS</shortName>
    </alternativeName>
</protein>
<gene>
    <name evidence="1" type="primary">fhs</name>
    <name type="ordered locus">CLM_4009</name>
</gene>
<keyword id="KW-0067">ATP-binding</keyword>
<keyword id="KW-0436">Ligase</keyword>
<keyword id="KW-0547">Nucleotide-binding</keyword>
<keyword id="KW-0554">One-carbon metabolism</keyword>
<sequence>MFKSDIEIAQESKMKNIKNIAEKIGLTEEDIDLYGKYKCKISLDVLKSNKDKKDGKLILVTAINPTPAGEGKSTVTVGLGQALWKKNKKAVIALREPSLGPVFGIKGGAAGGGYSQVVPMEDINLHFTGDMHAITSANNLLAAAIDNHIHQGNILKIDQRRILFKRVMDINDRALRNVIVALGGKINGFPREDGFMITVASEIMAILCLAEDLMNLKNKMGEILVAYSTEGKPIYCKDLEVQGAMALLMKDAIKPNLVQTLENTPAIIHGGPFANIAHGCNSILGTKMALKLGDYVITEAGFGADLGAEKFFDIKCRKANLKPNCVVIVATVRALKYNGGIPKENLKEQNMEALSKGIKNLGKHIENVNKFGVPAVVAINKFISDTEEEIEFIKKYCKELGAEVSIAEVWEKGGNGGLELADKVLDTIENKESKFNPIYEETLNIKQKIETIAQEIYGAEGVDYSKEAEKQISEIEKLDLDKKPVCMAKTQYSLSDDARLLGRPCGFRINVKEVRISNGAGFIVVLTGNVMTMPGLPKKPAANNMNVLSDGNIVGLF</sequence>
<dbReference type="EC" id="6.3.4.3" evidence="1"/>
<dbReference type="EMBL" id="CP001581">
    <property type="protein sequence ID" value="ACO84041.1"/>
    <property type="molecule type" value="Genomic_DNA"/>
</dbReference>
<dbReference type="RefSeq" id="WP_003359395.1">
    <property type="nucleotide sequence ID" value="NC_012563.1"/>
</dbReference>
<dbReference type="SMR" id="C1FND0"/>
<dbReference type="KEGG" id="cby:CLM_4009"/>
<dbReference type="eggNOG" id="COG2759">
    <property type="taxonomic scope" value="Bacteria"/>
</dbReference>
<dbReference type="HOGENOM" id="CLU_003601_3_3_9"/>
<dbReference type="UniPathway" id="UPA00193"/>
<dbReference type="Proteomes" id="UP000001374">
    <property type="component" value="Chromosome"/>
</dbReference>
<dbReference type="GO" id="GO:0005524">
    <property type="term" value="F:ATP binding"/>
    <property type="evidence" value="ECO:0007669"/>
    <property type="project" value="UniProtKB-UniRule"/>
</dbReference>
<dbReference type="GO" id="GO:0004329">
    <property type="term" value="F:formate-tetrahydrofolate ligase activity"/>
    <property type="evidence" value="ECO:0007669"/>
    <property type="project" value="UniProtKB-UniRule"/>
</dbReference>
<dbReference type="GO" id="GO:0035999">
    <property type="term" value="P:tetrahydrofolate interconversion"/>
    <property type="evidence" value="ECO:0007669"/>
    <property type="project" value="UniProtKB-UniRule"/>
</dbReference>
<dbReference type="CDD" id="cd00477">
    <property type="entry name" value="FTHFS"/>
    <property type="match status" value="1"/>
</dbReference>
<dbReference type="FunFam" id="3.30.1510.10:FF:000001">
    <property type="entry name" value="Formate--tetrahydrofolate ligase"/>
    <property type="match status" value="1"/>
</dbReference>
<dbReference type="FunFam" id="3.10.410.10:FF:000001">
    <property type="entry name" value="Putative formate--tetrahydrofolate ligase"/>
    <property type="match status" value="1"/>
</dbReference>
<dbReference type="Gene3D" id="3.30.1510.10">
    <property type="entry name" value="Domain 2, N(10)-formyltetrahydrofolate synthetase"/>
    <property type="match status" value="1"/>
</dbReference>
<dbReference type="Gene3D" id="3.10.410.10">
    <property type="entry name" value="Formyltetrahydrofolate synthetase, domain 3"/>
    <property type="match status" value="1"/>
</dbReference>
<dbReference type="Gene3D" id="3.40.50.300">
    <property type="entry name" value="P-loop containing nucleotide triphosphate hydrolases"/>
    <property type="match status" value="1"/>
</dbReference>
<dbReference type="HAMAP" id="MF_01543">
    <property type="entry name" value="FTHFS"/>
    <property type="match status" value="1"/>
</dbReference>
<dbReference type="InterPro" id="IPR000559">
    <property type="entry name" value="Formate_THF_ligase"/>
</dbReference>
<dbReference type="InterPro" id="IPR020628">
    <property type="entry name" value="Formate_THF_ligase_CS"/>
</dbReference>
<dbReference type="InterPro" id="IPR027417">
    <property type="entry name" value="P-loop_NTPase"/>
</dbReference>
<dbReference type="NCBIfam" id="NF010030">
    <property type="entry name" value="PRK13505.1"/>
    <property type="match status" value="1"/>
</dbReference>
<dbReference type="Pfam" id="PF01268">
    <property type="entry name" value="FTHFS"/>
    <property type="match status" value="1"/>
</dbReference>
<dbReference type="SUPFAM" id="SSF52540">
    <property type="entry name" value="P-loop containing nucleoside triphosphate hydrolases"/>
    <property type="match status" value="1"/>
</dbReference>
<dbReference type="PROSITE" id="PS00721">
    <property type="entry name" value="FTHFS_1"/>
    <property type="match status" value="1"/>
</dbReference>
<dbReference type="PROSITE" id="PS00722">
    <property type="entry name" value="FTHFS_2"/>
    <property type="match status" value="1"/>
</dbReference>
<reference key="1">
    <citation type="submission" date="2008-10" db="EMBL/GenBank/DDBJ databases">
        <title>Genome sequence of Clostridium botulinum A2 Kyoto.</title>
        <authorList>
            <person name="Shrivastava S."/>
            <person name="Brinkac L.M."/>
            <person name="Brown J.L."/>
            <person name="Bruce D."/>
            <person name="Detter C.C."/>
            <person name="Johnson E.A."/>
            <person name="Munk C.A."/>
            <person name="Smith L.A."/>
            <person name="Smith T.J."/>
            <person name="Sutton G."/>
            <person name="Brettin T.S."/>
        </authorList>
    </citation>
    <scope>NUCLEOTIDE SEQUENCE [LARGE SCALE GENOMIC DNA]</scope>
    <source>
        <strain>Kyoto / Type A2</strain>
    </source>
</reference>
<feature type="chain" id="PRO_1000185251" description="Formate--tetrahydrofolate ligase">
    <location>
        <begin position="1"/>
        <end position="557"/>
    </location>
</feature>
<feature type="binding site" evidence="1">
    <location>
        <begin position="66"/>
        <end position="73"/>
    </location>
    <ligand>
        <name>ATP</name>
        <dbReference type="ChEBI" id="CHEBI:30616"/>
    </ligand>
</feature>
<evidence type="ECO:0000255" key="1">
    <source>
        <dbReference type="HAMAP-Rule" id="MF_01543"/>
    </source>
</evidence>
<comment type="catalytic activity">
    <reaction evidence="1">
        <text>(6S)-5,6,7,8-tetrahydrofolate + formate + ATP = (6R)-10-formyltetrahydrofolate + ADP + phosphate</text>
        <dbReference type="Rhea" id="RHEA:20221"/>
        <dbReference type="ChEBI" id="CHEBI:15740"/>
        <dbReference type="ChEBI" id="CHEBI:30616"/>
        <dbReference type="ChEBI" id="CHEBI:43474"/>
        <dbReference type="ChEBI" id="CHEBI:57453"/>
        <dbReference type="ChEBI" id="CHEBI:195366"/>
        <dbReference type="ChEBI" id="CHEBI:456216"/>
        <dbReference type="EC" id="6.3.4.3"/>
    </reaction>
</comment>
<comment type="pathway">
    <text evidence="1">One-carbon metabolism; tetrahydrofolate interconversion.</text>
</comment>
<comment type="similarity">
    <text evidence="1">Belongs to the formate--tetrahydrofolate ligase family.</text>
</comment>